<protein>
    <recommendedName>
        <fullName>U14-theraphotoxin-Cg1a 2</fullName>
        <shortName>U14-TRTX-Cg1a</shortName>
    </recommendedName>
    <alternativeName>
        <fullName evidence="6">Jingzhaotoxin-21.2</fullName>
        <shortName evidence="6">JZTX-21.2</shortName>
    </alternativeName>
    <alternativeName>
        <fullName evidence="4">Peptide F3-11.69</fullName>
    </alternativeName>
</protein>
<reference key="1">
    <citation type="journal article" date="2008" name="Cell. Mol. Life Sci.">
        <title>Molecular diversity and evolution of cystine knot toxins of the tarantula Chilobrachys jingzhao.</title>
        <authorList>
            <person name="Chen J."/>
            <person name="Deng M."/>
            <person name="He Q."/>
            <person name="Meng E."/>
            <person name="Jiang L."/>
            <person name="Liao Z."/>
            <person name="Rong M."/>
            <person name="Liang S."/>
        </authorList>
    </citation>
    <scope>NUCLEOTIDE SEQUENCE [LARGE SCALE MRNA]</scope>
    <source>
        <tissue>Venom gland</tissue>
    </source>
</reference>
<reference key="2">
    <citation type="journal article" date="2007" name="Proteomics">
        <title>Proteomic and peptidomic analysis of the venom from Chinese tarantula Chilobrachys jingzhao.</title>
        <authorList>
            <person name="Liao Z."/>
            <person name="Cao J."/>
            <person name="Li S."/>
            <person name="Yan X."/>
            <person name="Hu W."/>
            <person name="He Q."/>
            <person name="Chen J."/>
            <person name="Tang J."/>
            <person name="Xie J."/>
            <person name="Liang S."/>
        </authorList>
    </citation>
    <scope>PROTEIN SEQUENCE OF 50-77</scope>
    <scope>MASS SPECTROMETRY</scope>
    <scope>AMIDATION AT LYS-77</scope>
    <source>
        <tissue>Venom</tissue>
    </source>
</reference>
<dbReference type="EMBL" id="EU233878">
    <property type="protein sequence ID" value="ABY71697.1"/>
    <property type="molecule type" value="mRNA"/>
</dbReference>
<dbReference type="ArachnoServer" id="AS000825">
    <property type="toxin name" value="U14-theraphotoxin-Cg1b"/>
</dbReference>
<dbReference type="GO" id="GO:0005576">
    <property type="term" value="C:extracellular region"/>
    <property type="evidence" value="ECO:0007669"/>
    <property type="project" value="UniProtKB-SubCell"/>
</dbReference>
<dbReference type="GO" id="GO:0099106">
    <property type="term" value="F:ion channel regulator activity"/>
    <property type="evidence" value="ECO:0007669"/>
    <property type="project" value="UniProtKB-KW"/>
</dbReference>
<dbReference type="GO" id="GO:0090729">
    <property type="term" value="F:toxin activity"/>
    <property type="evidence" value="ECO:0007669"/>
    <property type="project" value="UniProtKB-KW"/>
</dbReference>
<evidence type="ECO:0000250" key="1"/>
<evidence type="ECO:0000255" key="2"/>
<evidence type="ECO:0000269" key="3">
    <source>
    </source>
</evidence>
<evidence type="ECO:0000303" key="4">
    <source>
    </source>
</evidence>
<evidence type="ECO:0000305" key="5"/>
<evidence type="ECO:0000312" key="6">
    <source>
        <dbReference type="EMBL" id="ABY71697.1"/>
    </source>
</evidence>
<organism>
    <name type="scientific">Chilobrachys guangxiensis</name>
    <name type="common">Chinese earth tiger tarantula</name>
    <name type="synonym">Chilobrachys jingzhao</name>
    <dbReference type="NCBI Taxonomy" id="278060"/>
    <lineage>
        <taxon>Eukaryota</taxon>
        <taxon>Metazoa</taxon>
        <taxon>Ecdysozoa</taxon>
        <taxon>Arthropoda</taxon>
        <taxon>Chelicerata</taxon>
        <taxon>Arachnida</taxon>
        <taxon>Araneae</taxon>
        <taxon>Mygalomorphae</taxon>
        <taxon>Theraphosidae</taxon>
        <taxon>Chilobrachys</taxon>
    </lineage>
</organism>
<proteinExistence type="evidence at protein level"/>
<comment type="function">
    <text>Probable ion channel inhibitor.</text>
</comment>
<comment type="subcellular location">
    <subcellularLocation>
        <location>Secreted</location>
    </subcellularLocation>
</comment>
<comment type="tissue specificity">
    <text>Expressed by the venom gland.</text>
</comment>
<comment type="domain">
    <text evidence="1">The presence of a 'disulfide through disulfide knot' structurally defines this protein as a knottin.</text>
</comment>
<comment type="mass spectrometry">
    <text>Monoisotopic mass.</text>
</comment>
<comment type="similarity">
    <text evidence="5">Belongs to the neurotoxin 10 (Hwtx-1) family. 65 (Jztx-21) subfamily.</text>
</comment>
<sequence>MKTSVLLVILGIAAITVQCTASESVKQDSLRTFVDAVLGWNAEMASEARCGGWMAKCADSDDCCETFHCTRFNVCGK</sequence>
<feature type="signal peptide" evidence="2">
    <location>
        <begin position="1"/>
        <end position="21"/>
    </location>
</feature>
<feature type="propeptide" id="PRO_0000398441" evidence="3">
    <location>
        <begin position="22"/>
        <end position="49"/>
    </location>
</feature>
<feature type="peptide" id="PRO_0000398442" description="U14-theraphotoxin-Cg1a 2">
    <location>
        <begin position="50"/>
        <end position="77"/>
    </location>
</feature>
<feature type="modified residue" description="Lysine amide" evidence="3">
    <location>
        <position position="77"/>
    </location>
</feature>
<feature type="disulfide bond" evidence="1">
    <location>
        <begin position="50"/>
        <end position="64"/>
    </location>
</feature>
<feature type="disulfide bond" evidence="1">
    <location>
        <begin position="57"/>
        <end position="69"/>
    </location>
</feature>
<feature type="disulfide bond" evidence="1">
    <location>
        <begin position="63"/>
        <end position="75"/>
    </location>
</feature>
<accession>B1P1E7</accession>
<keyword id="KW-0027">Amidation</keyword>
<keyword id="KW-0903">Direct protein sequencing</keyword>
<keyword id="KW-1015">Disulfide bond</keyword>
<keyword id="KW-0872">Ion channel impairing toxin</keyword>
<keyword id="KW-0960">Knottin</keyword>
<keyword id="KW-0964">Secreted</keyword>
<keyword id="KW-0732">Signal</keyword>
<keyword id="KW-0800">Toxin</keyword>
<name>JZ21B_CHIGU</name>